<organism>
    <name type="scientific">Burkholderia multivorans (strain ATCC 17616 / 249)</name>
    <dbReference type="NCBI Taxonomy" id="395019"/>
    <lineage>
        <taxon>Bacteria</taxon>
        <taxon>Pseudomonadati</taxon>
        <taxon>Pseudomonadota</taxon>
        <taxon>Betaproteobacteria</taxon>
        <taxon>Burkholderiales</taxon>
        <taxon>Burkholderiaceae</taxon>
        <taxon>Burkholderia</taxon>
        <taxon>Burkholderia cepacia complex</taxon>
    </lineage>
</organism>
<evidence type="ECO:0000255" key="1">
    <source>
        <dbReference type="HAMAP-Rule" id="MF_00636"/>
    </source>
</evidence>
<accession>A9AEZ5</accession>
<sequence length="302" mass="33773">MRIVLITGISGSGKSVALNALEDAGYYCVDNLPPHVLPELARYLDEAGQRRLAVAIDARSSASLDEMPGLIRSLSREHDLRVLFLNASTQALIQRFSETRRRHPLSGSPSHDANVGLLSSLEEAIERERELVAPLAEFGHQIDTSTLRANVLRTWVKRFIEQNSNDLMLMFESFGFKRGVPLDADLMFDVRALPNPYYDHELRPLTGLDQPVIAFLDALPIVHQMIDDIHAFLMKWLPHFREDNRSYLTVAIGCTGGQHRSVFIAETLAARFASAANVIVRHRDAPVDVDASSRLVTEVDRP</sequence>
<comment type="function">
    <text evidence="1">Displays ATPase and GTPase activities.</text>
</comment>
<comment type="similarity">
    <text evidence="1">Belongs to the RapZ-like family.</text>
</comment>
<name>Y520_BURM1</name>
<proteinExistence type="inferred from homology"/>
<reference key="1">
    <citation type="submission" date="2007-10" db="EMBL/GenBank/DDBJ databases">
        <title>Complete sequence of chromosome 1 of Burkholderia multivorans ATCC 17616.</title>
        <authorList>
            <person name="Copeland A."/>
            <person name="Lucas S."/>
            <person name="Lapidus A."/>
            <person name="Barry K."/>
            <person name="Glavina del Rio T."/>
            <person name="Dalin E."/>
            <person name="Tice H."/>
            <person name="Pitluck S."/>
            <person name="Chain P."/>
            <person name="Malfatti S."/>
            <person name="Shin M."/>
            <person name="Vergez L."/>
            <person name="Schmutz J."/>
            <person name="Larimer F."/>
            <person name="Land M."/>
            <person name="Hauser L."/>
            <person name="Kyrpides N."/>
            <person name="Kim E."/>
            <person name="Tiedje J."/>
            <person name="Richardson P."/>
        </authorList>
    </citation>
    <scope>NUCLEOTIDE SEQUENCE [LARGE SCALE GENOMIC DNA]</scope>
    <source>
        <strain>ATCC 17616 / 249</strain>
    </source>
</reference>
<reference key="2">
    <citation type="submission" date="2007-04" db="EMBL/GenBank/DDBJ databases">
        <title>Complete genome sequence of Burkholderia multivorans ATCC 17616.</title>
        <authorList>
            <person name="Ohtsubo Y."/>
            <person name="Yamashita A."/>
            <person name="Kurokawa K."/>
            <person name="Takami H."/>
            <person name="Yuhara S."/>
            <person name="Nishiyama E."/>
            <person name="Endo R."/>
            <person name="Miyazaki R."/>
            <person name="Ono A."/>
            <person name="Yano K."/>
            <person name="Ito M."/>
            <person name="Sota M."/>
            <person name="Yuji N."/>
            <person name="Hattori M."/>
            <person name="Tsuda M."/>
        </authorList>
    </citation>
    <scope>NUCLEOTIDE SEQUENCE [LARGE SCALE GENOMIC DNA]</scope>
    <source>
        <strain>ATCC 17616 / 249</strain>
    </source>
</reference>
<protein>
    <recommendedName>
        <fullName evidence="1">Nucleotide-binding protein Bmul_0520/BMULJ_02739</fullName>
    </recommendedName>
</protein>
<gene>
    <name type="ordered locus">Bmul_0520</name>
    <name type="ordered locus">BMULJ_02739</name>
</gene>
<feature type="chain" id="PRO_1000130737" description="Nucleotide-binding protein Bmul_0520/BMULJ_02739">
    <location>
        <begin position="1"/>
        <end position="302"/>
    </location>
</feature>
<feature type="binding site" evidence="1">
    <location>
        <begin position="8"/>
        <end position="15"/>
    </location>
    <ligand>
        <name>ATP</name>
        <dbReference type="ChEBI" id="CHEBI:30616"/>
    </ligand>
</feature>
<feature type="binding site" evidence="1">
    <location>
        <begin position="57"/>
        <end position="60"/>
    </location>
    <ligand>
        <name>GTP</name>
        <dbReference type="ChEBI" id="CHEBI:37565"/>
    </ligand>
</feature>
<keyword id="KW-0067">ATP-binding</keyword>
<keyword id="KW-0342">GTP-binding</keyword>
<keyword id="KW-0547">Nucleotide-binding</keyword>
<keyword id="KW-1185">Reference proteome</keyword>
<dbReference type="EMBL" id="CP000868">
    <property type="protein sequence ID" value="ABX14215.1"/>
    <property type="molecule type" value="Genomic_DNA"/>
</dbReference>
<dbReference type="EMBL" id="AP009385">
    <property type="protein sequence ID" value="BAG44628.1"/>
    <property type="molecule type" value="Genomic_DNA"/>
</dbReference>
<dbReference type="SMR" id="A9AEZ5"/>
<dbReference type="STRING" id="395019.BMULJ_02739"/>
<dbReference type="KEGG" id="bmj:BMULJ_02739"/>
<dbReference type="KEGG" id="bmu:Bmul_0520"/>
<dbReference type="eggNOG" id="COG1660">
    <property type="taxonomic scope" value="Bacteria"/>
</dbReference>
<dbReference type="HOGENOM" id="CLU_059558_1_1_4"/>
<dbReference type="Proteomes" id="UP000008815">
    <property type="component" value="Chromosome 1"/>
</dbReference>
<dbReference type="GO" id="GO:0005524">
    <property type="term" value="F:ATP binding"/>
    <property type="evidence" value="ECO:0007669"/>
    <property type="project" value="UniProtKB-UniRule"/>
</dbReference>
<dbReference type="GO" id="GO:0005525">
    <property type="term" value="F:GTP binding"/>
    <property type="evidence" value="ECO:0007669"/>
    <property type="project" value="UniProtKB-UniRule"/>
</dbReference>
<dbReference type="HAMAP" id="MF_00636">
    <property type="entry name" value="RapZ_like"/>
    <property type="match status" value="1"/>
</dbReference>
<dbReference type="InterPro" id="IPR027417">
    <property type="entry name" value="P-loop_NTPase"/>
</dbReference>
<dbReference type="InterPro" id="IPR005337">
    <property type="entry name" value="RapZ-like"/>
</dbReference>
<dbReference type="InterPro" id="IPR053930">
    <property type="entry name" value="RapZ-like_N"/>
</dbReference>
<dbReference type="InterPro" id="IPR053931">
    <property type="entry name" value="RapZ_C"/>
</dbReference>
<dbReference type="NCBIfam" id="NF003828">
    <property type="entry name" value="PRK05416.1"/>
    <property type="match status" value="1"/>
</dbReference>
<dbReference type="PANTHER" id="PTHR30448">
    <property type="entry name" value="RNASE ADAPTER PROTEIN RAPZ"/>
    <property type="match status" value="1"/>
</dbReference>
<dbReference type="PANTHER" id="PTHR30448:SF0">
    <property type="entry name" value="RNASE ADAPTER PROTEIN RAPZ"/>
    <property type="match status" value="1"/>
</dbReference>
<dbReference type="Pfam" id="PF22740">
    <property type="entry name" value="PapZ_C"/>
    <property type="match status" value="1"/>
</dbReference>
<dbReference type="Pfam" id="PF03668">
    <property type="entry name" value="RapZ-like_N"/>
    <property type="match status" value="1"/>
</dbReference>
<dbReference type="PIRSF" id="PIRSF005052">
    <property type="entry name" value="P-loopkin"/>
    <property type="match status" value="1"/>
</dbReference>
<dbReference type="SUPFAM" id="SSF52540">
    <property type="entry name" value="P-loop containing nucleoside triphosphate hydrolases"/>
    <property type="match status" value="1"/>
</dbReference>